<organism>
    <name type="scientific">Synechococcus sp. (strain CC9311)</name>
    <dbReference type="NCBI Taxonomy" id="64471"/>
    <lineage>
        <taxon>Bacteria</taxon>
        <taxon>Bacillati</taxon>
        <taxon>Cyanobacteriota</taxon>
        <taxon>Cyanophyceae</taxon>
        <taxon>Synechococcales</taxon>
        <taxon>Synechococcaceae</taxon>
        <taxon>Synechococcus</taxon>
    </lineage>
</organism>
<reference key="1">
    <citation type="journal article" date="2006" name="Proc. Natl. Acad. Sci. U.S.A.">
        <title>Genome sequence of Synechococcus CC9311: insights into adaptation to a coastal environment.</title>
        <authorList>
            <person name="Palenik B."/>
            <person name="Ren Q."/>
            <person name="Dupont C.L."/>
            <person name="Myers G.S."/>
            <person name="Heidelberg J.F."/>
            <person name="Badger J.H."/>
            <person name="Madupu R."/>
            <person name="Nelson W.C."/>
            <person name="Brinkac L.M."/>
            <person name="Dodson R.J."/>
            <person name="Durkin A.S."/>
            <person name="Daugherty S.C."/>
            <person name="Sullivan S.A."/>
            <person name="Khouri H."/>
            <person name="Mohamoud Y."/>
            <person name="Halpin R."/>
            <person name="Paulsen I.T."/>
        </authorList>
    </citation>
    <scope>NUCLEOTIDE SEQUENCE [LARGE SCALE GENOMIC DNA]</scope>
    <source>
        <strain>CC9311</strain>
    </source>
</reference>
<proteinExistence type="inferred from homology"/>
<gene>
    <name evidence="1" type="primary">rpsH</name>
    <name evidence="1" type="synonym">rps8</name>
    <name type="ordered locus">sync_0424</name>
</gene>
<feature type="chain" id="PRO_0000290948" description="Small ribosomal subunit protein uS8">
    <location>
        <begin position="1"/>
        <end position="133"/>
    </location>
</feature>
<feature type="region of interest" description="Disordered" evidence="2">
    <location>
        <begin position="1"/>
        <end position="32"/>
    </location>
</feature>
<feature type="compositionally biased region" description="Basic and acidic residues" evidence="2">
    <location>
        <begin position="16"/>
        <end position="25"/>
    </location>
</feature>
<name>RS8_SYNS3</name>
<keyword id="KW-1185">Reference proteome</keyword>
<keyword id="KW-0687">Ribonucleoprotein</keyword>
<keyword id="KW-0689">Ribosomal protein</keyword>
<keyword id="KW-0694">RNA-binding</keyword>
<keyword id="KW-0699">rRNA-binding</keyword>
<evidence type="ECO:0000255" key="1">
    <source>
        <dbReference type="HAMAP-Rule" id="MF_01302"/>
    </source>
</evidence>
<evidence type="ECO:0000256" key="2">
    <source>
        <dbReference type="SAM" id="MobiDB-lite"/>
    </source>
</evidence>
<evidence type="ECO:0000305" key="3"/>
<protein>
    <recommendedName>
        <fullName evidence="1">Small ribosomal subunit protein uS8</fullName>
    </recommendedName>
    <alternativeName>
        <fullName evidence="3">30S ribosomal protein S8</fullName>
    </alternativeName>
</protein>
<accession>Q0ID18</accession>
<dbReference type="EMBL" id="CP000435">
    <property type="protein sequence ID" value="ABI46346.1"/>
    <property type="molecule type" value="Genomic_DNA"/>
</dbReference>
<dbReference type="RefSeq" id="WP_011618389.1">
    <property type="nucleotide sequence ID" value="NC_008319.1"/>
</dbReference>
<dbReference type="SMR" id="Q0ID18"/>
<dbReference type="STRING" id="64471.sync_0424"/>
<dbReference type="KEGG" id="syg:sync_0424"/>
<dbReference type="eggNOG" id="COG0096">
    <property type="taxonomic scope" value="Bacteria"/>
</dbReference>
<dbReference type="HOGENOM" id="CLU_098428_0_2_3"/>
<dbReference type="OrthoDB" id="9802617at2"/>
<dbReference type="Proteomes" id="UP000001961">
    <property type="component" value="Chromosome"/>
</dbReference>
<dbReference type="GO" id="GO:1990904">
    <property type="term" value="C:ribonucleoprotein complex"/>
    <property type="evidence" value="ECO:0007669"/>
    <property type="project" value="UniProtKB-KW"/>
</dbReference>
<dbReference type="GO" id="GO:0005840">
    <property type="term" value="C:ribosome"/>
    <property type="evidence" value="ECO:0007669"/>
    <property type="project" value="UniProtKB-KW"/>
</dbReference>
<dbReference type="GO" id="GO:0019843">
    <property type="term" value="F:rRNA binding"/>
    <property type="evidence" value="ECO:0007669"/>
    <property type="project" value="UniProtKB-UniRule"/>
</dbReference>
<dbReference type="GO" id="GO:0003735">
    <property type="term" value="F:structural constituent of ribosome"/>
    <property type="evidence" value="ECO:0007669"/>
    <property type="project" value="InterPro"/>
</dbReference>
<dbReference type="GO" id="GO:0006412">
    <property type="term" value="P:translation"/>
    <property type="evidence" value="ECO:0007669"/>
    <property type="project" value="UniProtKB-UniRule"/>
</dbReference>
<dbReference type="FunFam" id="3.30.1370.30:FF:000002">
    <property type="entry name" value="30S ribosomal protein S8"/>
    <property type="match status" value="1"/>
</dbReference>
<dbReference type="FunFam" id="3.30.1490.10:FF:000001">
    <property type="entry name" value="30S ribosomal protein S8"/>
    <property type="match status" value="1"/>
</dbReference>
<dbReference type="Gene3D" id="3.30.1370.30">
    <property type="match status" value="1"/>
</dbReference>
<dbReference type="Gene3D" id="3.30.1490.10">
    <property type="match status" value="1"/>
</dbReference>
<dbReference type="HAMAP" id="MF_01302_B">
    <property type="entry name" value="Ribosomal_uS8_B"/>
    <property type="match status" value="1"/>
</dbReference>
<dbReference type="InterPro" id="IPR000630">
    <property type="entry name" value="Ribosomal_uS8"/>
</dbReference>
<dbReference type="InterPro" id="IPR047863">
    <property type="entry name" value="Ribosomal_uS8_CS"/>
</dbReference>
<dbReference type="InterPro" id="IPR035987">
    <property type="entry name" value="Ribosomal_uS8_sf"/>
</dbReference>
<dbReference type="NCBIfam" id="NF001109">
    <property type="entry name" value="PRK00136.1"/>
    <property type="match status" value="1"/>
</dbReference>
<dbReference type="PANTHER" id="PTHR11758">
    <property type="entry name" value="40S RIBOSOMAL PROTEIN S15A"/>
    <property type="match status" value="1"/>
</dbReference>
<dbReference type="Pfam" id="PF00410">
    <property type="entry name" value="Ribosomal_S8"/>
    <property type="match status" value="1"/>
</dbReference>
<dbReference type="SUPFAM" id="SSF56047">
    <property type="entry name" value="Ribosomal protein S8"/>
    <property type="match status" value="1"/>
</dbReference>
<dbReference type="PROSITE" id="PS00053">
    <property type="entry name" value="RIBOSOMAL_S8"/>
    <property type="match status" value="1"/>
</dbReference>
<sequence>MANHDPISDMLTRIRNASEKRHESTKVPASRMSRSIAKVLQQEGFIAEISEQGEGVRTELVLGLKYSGKHRQPTIRSMQRVSKPGLRIYKNTRGLPKVLGGLGVAIISTSKGVMSDRDARKQGVGGEVLCYVY</sequence>
<comment type="function">
    <text evidence="1">One of the primary rRNA binding proteins, it binds directly to 16S rRNA central domain where it helps coordinate assembly of the platform of the 30S subunit.</text>
</comment>
<comment type="subunit">
    <text evidence="1">Part of the 30S ribosomal subunit. Contacts proteins S5 and S12.</text>
</comment>
<comment type="similarity">
    <text evidence="1">Belongs to the universal ribosomal protein uS8 family.</text>
</comment>